<name>GREA_RHOPA</name>
<comment type="function">
    <text evidence="1">Necessary for efficient RNA polymerase transcription elongation past template-encoded arresting sites. The arresting sites in DNA have the property of trapping a certain fraction of elongating RNA polymerases that pass through, resulting in locked ternary complexes. Cleavage of the nascent transcript by cleavage factors such as GreA or GreB allows the resumption of elongation from the new 3'terminus. GreA releases sequences of 2 to 3 nucleotides.</text>
</comment>
<comment type="similarity">
    <text evidence="1">Belongs to the GreA/GreB family.</text>
</comment>
<keyword id="KW-0175">Coiled coil</keyword>
<keyword id="KW-0238">DNA-binding</keyword>
<keyword id="KW-0804">Transcription</keyword>
<keyword id="KW-0805">Transcription regulation</keyword>
<reference key="1">
    <citation type="journal article" date="2004" name="Nat. Biotechnol.">
        <title>Complete genome sequence of the metabolically versatile photosynthetic bacterium Rhodopseudomonas palustris.</title>
        <authorList>
            <person name="Larimer F.W."/>
            <person name="Chain P."/>
            <person name="Hauser L."/>
            <person name="Lamerdin J.E."/>
            <person name="Malfatti S."/>
            <person name="Do L."/>
            <person name="Land M.L."/>
            <person name="Pelletier D.A."/>
            <person name="Beatty J.T."/>
            <person name="Lang A.S."/>
            <person name="Tabita F.R."/>
            <person name="Gibson J.L."/>
            <person name="Hanson T.E."/>
            <person name="Bobst C."/>
            <person name="Torres y Torres J.L."/>
            <person name="Peres C."/>
            <person name="Harrison F.H."/>
            <person name="Gibson J."/>
            <person name="Harwood C.S."/>
        </authorList>
    </citation>
    <scope>NUCLEOTIDE SEQUENCE [LARGE SCALE GENOMIC DNA]</scope>
    <source>
        <strain>ATCC BAA-98 / CGA009</strain>
    </source>
</reference>
<accession>Q6N2H8</accession>
<protein>
    <recommendedName>
        <fullName evidence="1">Transcription elongation factor GreA</fullName>
    </recommendedName>
    <alternativeName>
        <fullName evidence="1">Transcript cleavage factor GreA</fullName>
    </alternativeName>
</protein>
<evidence type="ECO:0000255" key="1">
    <source>
        <dbReference type="HAMAP-Rule" id="MF_00105"/>
    </source>
</evidence>
<sequence length="158" mass="17160">MVEKIPMTASGYAALSDELKHRQSVDRPRIIEHIAEARSHGDLSENAEYHAAKEEQSHNEGRINELEDKLARADIIDVSKLSGDTVKFGATVTLIDEDTEKKAVWQIVGEAEADAKKGKISITSPLARALIGKKAGSSVEVVAPGGAKAYEIAKVEWR</sequence>
<gene>
    <name evidence="1" type="primary">greA</name>
    <name type="ordered locus">RPA4072</name>
</gene>
<feature type="chain" id="PRO_1000094191" description="Transcription elongation factor GreA">
    <location>
        <begin position="1"/>
        <end position="158"/>
    </location>
</feature>
<feature type="coiled-coil region" evidence="1">
    <location>
        <begin position="47"/>
        <end position="74"/>
    </location>
</feature>
<organism>
    <name type="scientific">Rhodopseudomonas palustris (strain ATCC BAA-98 / CGA009)</name>
    <dbReference type="NCBI Taxonomy" id="258594"/>
    <lineage>
        <taxon>Bacteria</taxon>
        <taxon>Pseudomonadati</taxon>
        <taxon>Pseudomonadota</taxon>
        <taxon>Alphaproteobacteria</taxon>
        <taxon>Hyphomicrobiales</taxon>
        <taxon>Nitrobacteraceae</taxon>
        <taxon>Rhodopseudomonas</taxon>
    </lineage>
</organism>
<dbReference type="EMBL" id="BX572606">
    <property type="protein sequence ID" value="CAE29513.1"/>
    <property type="molecule type" value="Genomic_DNA"/>
</dbReference>
<dbReference type="RefSeq" id="WP_011159607.1">
    <property type="nucleotide sequence ID" value="NZ_CP116810.1"/>
</dbReference>
<dbReference type="SMR" id="Q6N2H8"/>
<dbReference type="STRING" id="258594.RPA4072"/>
<dbReference type="GeneID" id="66895191"/>
<dbReference type="eggNOG" id="COG0782">
    <property type="taxonomic scope" value="Bacteria"/>
</dbReference>
<dbReference type="HOGENOM" id="CLU_101379_2_0_5"/>
<dbReference type="PhylomeDB" id="Q6N2H8"/>
<dbReference type="GO" id="GO:0003677">
    <property type="term" value="F:DNA binding"/>
    <property type="evidence" value="ECO:0007669"/>
    <property type="project" value="UniProtKB-UniRule"/>
</dbReference>
<dbReference type="GO" id="GO:0070063">
    <property type="term" value="F:RNA polymerase binding"/>
    <property type="evidence" value="ECO:0007669"/>
    <property type="project" value="InterPro"/>
</dbReference>
<dbReference type="GO" id="GO:0006354">
    <property type="term" value="P:DNA-templated transcription elongation"/>
    <property type="evidence" value="ECO:0007669"/>
    <property type="project" value="TreeGrafter"/>
</dbReference>
<dbReference type="GO" id="GO:0032784">
    <property type="term" value="P:regulation of DNA-templated transcription elongation"/>
    <property type="evidence" value="ECO:0007669"/>
    <property type="project" value="UniProtKB-UniRule"/>
</dbReference>
<dbReference type="FunFam" id="1.10.287.180:FF:000001">
    <property type="entry name" value="Transcription elongation factor GreA"/>
    <property type="match status" value="1"/>
</dbReference>
<dbReference type="FunFam" id="3.10.50.30:FF:000001">
    <property type="entry name" value="Transcription elongation factor GreA"/>
    <property type="match status" value="1"/>
</dbReference>
<dbReference type="Gene3D" id="3.10.50.30">
    <property type="entry name" value="Transcription elongation factor, GreA/GreB, C-terminal domain"/>
    <property type="match status" value="1"/>
</dbReference>
<dbReference type="Gene3D" id="1.10.287.180">
    <property type="entry name" value="Transcription elongation factor, GreA/GreB, N-terminal domain"/>
    <property type="match status" value="1"/>
</dbReference>
<dbReference type="HAMAP" id="MF_00105">
    <property type="entry name" value="GreA_GreB"/>
    <property type="match status" value="1"/>
</dbReference>
<dbReference type="InterPro" id="IPR036953">
    <property type="entry name" value="GreA/GreB_C_sf"/>
</dbReference>
<dbReference type="InterPro" id="IPR018151">
    <property type="entry name" value="TF_GreA/GreB_CS"/>
</dbReference>
<dbReference type="InterPro" id="IPR006359">
    <property type="entry name" value="Tscrpt_elong_fac_GreA"/>
</dbReference>
<dbReference type="InterPro" id="IPR028624">
    <property type="entry name" value="Tscrpt_elong_fac_GreA/B"/>
</dbReference>
<dbReference type="InterPro" id="IPR001437">
    <property type="entry name" value="Tscrpt_elong_fac_GreA/B_C"/>
</dbReference>
<dbReference type="InterPro" id="IPR023459">
    <property type="entry name" value="Tscrpt_elong_fac_GreA/B_fam"/>
</dbReference>
<dbReference type="InterPro" id="IPR022691">
    <property type="entry name" value="Tscrpt_elong_fac_GreA/B_N"/>
</dbReference>
<dbReference type="InterPro" id="IPR036805">
    <property type="entry name" value="Tscrpt_elong_fac_GreA/B_N_sf"/>
</dbReference>
<dbReference type="NCBIfam" id="TIGR01462">
    <property type="entry name" value="greA"/>
    <property type="match status" value="1"/>
</dbReference>
<dbReference type="NCBIfam" id="NF001261">
    <property type="entry name" value="PRK00226.1-2"/>
    <property type="match status" value="1"/>
</dbReference>
<dbReference type="NCBIfam" id="NF001263">
    <property type="entry name" value="PRK00226.1-4"/>
    <property type="match status" value="1"/>
</dbReference>
<dbReference type="NCBIfam" id="NF001264">
    <property type="entry name" value="PRK00226.1-5"/>
    <property type="match status" value="1"/>
</dbReference>
<dbReference type="PANTHER" id="PTHR30437">
    <property type="entry name" value="TRANSCRIPTION ELONGATION FACTOR GREA"/>
    <property type="match status" value="1"/>
</dbReference>
<dbReference type="PANTHER" id="PTHR30437:SF4">
    <property type="entry name" value="TRANSCRIPTION ELONGATION FACTOR GREA"/>
    <property type="match status" value="1"/>
</dbReference>
<dbReference type="Pfam" id="PF01272">
    <property type="entry name" value="GreA_GreB"/>
    <property type="match status" value="1"/>
</dbReference>
<dbReference type="Pfam" id="PF03449">
    <property type="entry name" value="GreA_GreB_N"/>
    <property type="match status" value="1"/>
</dbReference>
<dbReference type="PIRSF" id="PIRSF006092">
    <property type="entry name" value="GreA_GreB"/>
    <property type="match status" value="1"/>
</dbReference>
<dbReference type="SUPFAM" id="SSF54534">
    <property type="entry name" value="FKBP-like"/>
    <property type="match status" value="1"/>
</dbReference>
<dbReference type="SUPFAM" id="SSF46557">
    <property type="entry name" value="GreA transcript cleavage protein, N-terminal domain"/>
    <property type="match status" value="1"/>
</dbReference>
<dbReference type="PROSITE" id="PS00829">
    <property type="entry name" value="GREAB_1"/>
    <property type="match status" value="1"/>
</dbReference>
<proteinExistence type="inferred from homology"/>